<protein>
    <recommendedName>
        <fullName evidence="1">Ferrochelatase</fullName>
        <ecNumber evidence="1">4.98.1.1</ecNumber>
    </recommendedName>
    <alternativeName>
        <fullName evidence="1">Heme synthase</fullName>
    </alternativeName>
    <alternativeName>
        <fullName evidence="1">Protoheme ferro-lyase</fullName>
    </alternativeName>
</protein>
<feature type="chain" id="PRO_1000019300" description="Ferrochelatase">
    <location>
        <begin position="1"/>
        <end position="332"/>
    </location>
</feature>
<feature type="binding site" evidence="1">
    <location>
        <position position="201"/>
    </location>
    <ligand>
        <name>Fe cation</name>
        <dbReference type="ChEBI" id="CHEBI:24875"/>
    </ligand>
</feature>
<feature type="binding site" evidence="1">
    <location>
        <position position="283"/>
    </location>
    <ligand>
        <name>Fe cation</name>
        <dbReference type="ChEBI" id="CHEBI:24875"/>
    </ligand>
</feature>
<organism>
    <name type="scientific">Francisella tularensis subsp. holarctica (strain FTNF002-00 / FTA)</name>
    <dbReference type="NCBI Taxonomy" id="458234"/>
    <lineage>
        <taxon>Bacteria</taxon>
        <taxon>Pseudomonadati</taxon>
        <taxon>Pseudomonadota</taxon>
        <taxon>Gammaproteobacteria</taxon>
        <taxon>Thiotrichales</taxon>
        <taxon>Francisellaceae</taxon>
        <taxon>Francisella</taxon>
    </lineage>
</organism>
<sequence>MQQYSSKYNKQAILLVNLGTPDNYDTKSIKRYLKEFLSDPRVIEANPILWKIILNLIILPIRAKKNIHTYKTVWNKQHNKSPLLFYTENLADKLDKKLDNYIVDYAMRYGNPSIESKIKSLQDQGATEIIIFPLYPQYSATTATVYDEVYRVLSKLRWQPTIKGINPYYDNKFHIQTISQQIKEHLKKLDSTPDTVLFSFHGLPKEYFDKGDPYYCHCYKTYRLVKEELQNEYPNIDFELSFQSRFGPKKWLEPYTTVKLEEFAKQNKSVVIIAPGFSADCLETLEELAISEKENFIKKGGKEFSLIPCLNDSNQHVDMLYNIIDEEICLKK</sequence>
<comment type="function">
    <text evidence="1">Catalyzes the ferrous insertion into protoporphyrin IX.</text>
</comment>
<comment type="catalytic activity">
    <reaction evidence="1">
        <text>heme b + 2 H(+) = protoporphyrin IX + Fe(2+)</text>
        <dbReference type="Rhea" id="RHEA:22584"/>
        <dbReference type="ChEBI" id="CHEBI:15378"/>
        <dbReference type="ChEBI" id="CHEBI:29033"/>
        <dbReference type="ChEBI" id="CHEBI:57306"/>
        <dbReference type="ChEBI" id="CHEBI:60344"/>
        <dbReference type="EC" id="4.98.1.1"/>
    </reaction>
</comment>
<comment type="pathway">
    <text evidence="1">Porphyrin-containing compound metabolism; protoheme biosynthesis; protoheme from protoporphyrin-IX: step 1/1.</text>
</comment>
<comment type="subcellular location">
    <subcellularLocation>
        <location evidence="1">Cytoplasm</location>
    </subcellularLocation>
</comment>
<comment type="similarity">
    <text evidence="1">Belongs to the ferrochelatase family.</text>
</comment>
<gene>
    <name evidence="1" type="primary">hemH</name>
    <name type="ordered locus">FTA_0870</name>
</gene>
<accession>A7NBJ3</accession>
<proteinExistence type="inferred from homology"/>
<evidence type="ECO:0000255" key="1">
    <source>
        <dbReference type="HAMAP-Rule" id="MF_00323"/>
    </source>
</evidence>
<name>HEMH_FRATF</name>
<keyword id="KW-0963">Cytoplasm</keyword>
<keyword id="KW-0350">Heme biosynthesis</keyword>
<keyword id="KW-0408">Iron</keyword>
<keyword id="KW-0456">Lyase</keyword>
<keyword id="KW-0479">Metal-binding</keyword>
<keyword id="KW-0627">Porphyrin biosynthesis</keyword>
<dbReference type="EC" id="4.98.1.1" evidence="1"/>
<dbReference type="EMBL" id="CP000803">
    <property type="protein sequence ID" value="ABU61346.1"/>
    <property type="molecule type" value="Genomic_DNA"/>
</dbReference>
<dbReference type="RefSeq" id="WP_012118977.1">
    <property type="nucleotide sequence ID" value="NC_009749.1"/>
</dbReference>
<dbReference type="SMR" id="A7NBJ3"/>
<dbReference type="KEGG" id="fta:FTA_0870"/>
<dbReference type="HOGENOM" id="CLU_018884_0_0_6"/>
<dbReference type="UniPathway" id="UPA00252">
    <property type="reaction ID" value="UER00325"/>
</dbReference>
<dbReference type="GO" id="GO:0005737">
    <property type="term" value="C:cytoplasm"/>
    <property type="evidence" value="ECO:0007669"/>
    <property type="project" value="UniProtKB-SubCell"/>
</dbReference>
<dbReference type="GO" id="GO:0004325">
    <property type="term" value="F:ferrochelatase activity"/>
    <property type="evidence" value="ECO:0007669"/>
    <property type="project" value="UniProtKB-UniRule"/>
</dbReference>
<dbReference type="GO" id="GO:0046872">
    <property type="term" value="F:metal ion binding"/>
    <property type="evidence" value="ECO:0007669"/>
    <property type="project" value="UniProtKB-KW"/>
</dbReference>
<dbReference type="GO" id="GO:0006783">
    <property type="term" value="P:heme biosynthetic process"/>
    <property type="evidence" value="ECO:0007669"/>
    <property type="project" value="UniProtKB-UniRule"/>
</dbReference>
<dbReference type="CDD" id="cd00419">
    <property type="entry name" value="Ferrochelatase_C"/>
    <property type="match status" value="1"/>
</dbReference>
<dbReference type="CDD" id="cd03411">
    <property type="entry name" value="Ferrochelatase_N"/>
    <property type="match status" value="1"/>
</dbReference>
<dbReference type="FunFam" id="3.40.50.1400:FF:000002">
    <property type="entry name" value="Ferrochelatase"/>
    <property type="match status" value="1"/>
</dbReference>
<dbReference type="Gene3D" id="3.40.50.1400">
    <property type="match status" value="2"/>
</dbReference>
<dbReference type="HAMAP" id="MF_00323">
    <property type="entry name" value="Ferrochelatase"/>
    <property type="match status" value="1"/>
</dbReference>
<dbReference type="InterPro" id="IPR001015">
    <property type="entry name" value="Ferrochelatase"/>
</dbReference>
<dbReference type="InterPro" id="IPR019772">
    <property type="entry name" value="Ferrochelatase_AS"/>
</dbReference>
<dbReference type="InterPro" id="IPR033644">
    <property type="entry name" value="Ferrochelatase_C"/>
</dbReference>
<dbReference type="InterPro" id="IPR033659">
    <property type="entry name" value="Ferrochelatase_N"/>
</dbReference>
<dbReference type="NCBIfam" id="TIGR00109">
    <property type="entry name" value="hemH"/>
    <property type="match status" value="1"/>
</dbReference>
<dbReference type="PANTHER" id="PTHR11108">
    <property type="entry name" value="FERROCHELATASE"/>
    <property type="match status" value="1"/>
</dbReference>
<dbReference type="PANTHER" id="PTHR11108:SF1">
    <property type="entry name" value="FERROCHELATASE, MITOCHONDRIAL"/>
    <property type="match status" value="1"/>
</dbReference>
<dbReference type="Pfam" id="PF00762">
    <property type="entry name" value="Ferrochelatase"/>
    <property type="match status" value="1"/>
</dbReference>
<dbReference type="SUPFAM" id="SSF53800">
    <property type="entry name" value="Chelatase"/>
    <property type="match status" value="1"/>
</dbReference>
<dbReference type="PROSITE" id="PS00534">
    <property type="entry name" value="FERROCHELATASE"/>
    <property type="match status" value="1"/>
</dbReference>
<reference key="1">
    <citation type="journal article" date="2009" name="PLoS ONE">
        <title>Complete genome sequence of Francisella tularensis subspecies holarctica FTNF002-00.</title>
        <authorList>
            <person name="Barabote R.D."/>
            <person name="Xie G."/>
            <person name="Brettin T.S."/>
            <person name="Hinrichs S.H."/>
            <person name="Fey P.D."/>
            <person name="Jay J.J."/>
            <person name="Engle J.L."/>
            <person name="Godbole S.D."/>
            <person name="Noronha J.M."/>
            <person name="Scheuermann R.H."/>
            <person name="Zhou L.W."/>
            <person name="Lion C."/>
            <person name="Dempsey M.P."/>
        </authorList>
    </citation>
    <scope>NUCLEOTIDE SEQUENCE [LARGE SCALE GENOMIC DNA]</scope>
    <source>
        <strain>FTNF002-00 / FTA</strain>
    </source>
</reference>